<feature type="signal peptide" evidence="1">
    <location>
        <begin position="1"/>
        <end position="48"/>
    </location>
</feature>
<feature type="chain" id="PRO_0000005639" description="Surface protein">
    <location>
        <begin position="49"/>
        <end position="1601"/>
    </location>
</feature>
<feature type="propeptide" id="PRO_0000005640" description="Removed by sortase" evidence="3">
    <location>
        <begin position="1602"/>
        <end position="1637"/>
    </location>
</feature>
<feature type="domain" description="G5 1" evidence="2">
    <location>
        <begin position="654"/>
        <end position="737"/>
    </location>
</feature>
<feature type="domain" description="G5 2" evidence="2">
    <location>
        <begin position="783"/>
        <end position="865"/>
    </location>
</feature>
<feature type="domain" description="G5 3" evidence="2">
    <location>
        <begin position="911"/>
        <end position="993"/>
    </location>
</feature>
<feature type="domain" description="G5 4" evidence="2">
    <location>
        <begin position="1039"/>
        <end position="1121"/>
    </location>
</feature>
<feature type="domain" description="G5 5" evidence="2">
    <location>
        <begin position="1167"/>
        <end position="1250"/>
    </location>
</feature>
<feature type="repeat" description="1">
    <location>
        <begin position="1301"/>
        <end position="1302"/>
    </location>
</feature>
<feature type="repeat" description="2">
    <location>
        <begin position="1303"/>
        <end position="1304"/>
    </location>
</feature>
<feature type="repeat" description="3">
    <location>
        <begin position="1305"/>
        <end position="1306"/>
    </location>
</feature>
<feature type="repeat" description="4">
    <location>
        <begin position="1307"/>
        <end position="1308"/>
    </location>
</feature>
<feature type="repeat" description="5">
    <location>
        <begin position="1309"/>
        <end position="1310"/>
    </location>
</feature>
<feature type="repeat" description="6">
    <location>
        <begin position="1311"/>
        <end position="1312"/>
    </location>
</feature>
<feature type="repeat" description="7">
    <location>
        <begin position="1313"/>
        <end position="1314"/>
    </location>
</feature>
<feature type="repeat" description="8">
    <location>
        <begin position="1315"/>
        <end position="1316"/>
    </location>
</feature>
<feature type="repeat" description="9">
    <location>
        <begin position="1317"/>
        <end position="1318"/>
    </location>
</feature>
<feature type="repeat" description="10">
    <location>
        <begin position="1319"/>
        <end position="1320"/>
    </location>
</feature>
<feature type="repeat" description="11">
    <location>
        <begin position="1321"/>
        <end position="1322"/>
    </location>
</feature>
<feature type="repeat" description="12">
    <location>
        <begin position="1323"/>
        <end position="1324"/>
    </location>
</feature>
<feature type="repeat" description="13">
    <location>
        <begin position="1325"/>
        <end position="1326"/>
    </location>
</feature>
<feature type="repeat" description="14">
    <location>
        <begin position="1327"/>
        <end position="1328"/>
    </location>
</feature>
<feature type="repeat" description="15">
    <location>
        <begin position="1329"/>
        <end position="1330"/>
    </location>
</feature>
<feature type="repeat" description="16">
    <location>
        <begin position="1331"/>
        <end position="1332"/>
    </location>
</feature>
<feature type="repeat" description="17">
    <location>
        <begin position="1333"/>
        <end position="1334"/>
    </location>
</feature>
<feature type="repeat" description="18">
    <location>
        <begin position="1335"/>
        <end position="1336"/>
    </location>
</feature>
<feature type="repeat" description="19">
    <location>
        <begin position="1337"/>
        <end position="1338"/>
    </location>
</feature>
<feature type="repeat" description="20">
    <location>
        <begin position="1339"/>
        <end position="1340"/>
    </location>
</feature>
<feature type="repeat" description="21">
    <location>
        <begin position="1341"/>
        <end position="1342"/>
    </location>
</feature>
<feature type="repeat" description="22">
    <location>
        <begin position="1343"/>
        <end position="1344"/>
    </location>
</feature>
<feature type="repeat" description="23">
    <location>
        <begin position="1345"/>
        <end position="1346"/>
    </location>
</feature>
<feature type="repeat" description="24">
    <location>
        <begin position="1347"/>
        <end position="1348"/>
    </location>
</feature>
<feature type="repeat" description="25">
    <location>
        <begin position="1349"/>
        <end position="1350"/>
    </location>
</feature>
<feature type="repeat" description="26">
    <location>
        <begin position="1351"/>
        <end position="1352"/>
    </location>
</feature>
<feature type="repeat" description="27">
    <location>
        <begin position="1353"/>
        <end position="1354"/>
    </location>
</feature>
<feature type="repeat" description="28">
    <location>
        <begin position="1355"/>
        <end position="1356"/>
    </location>
</feature>
<feature type="repeat" description="29">
    <location>
        <begin position="1357"/>
        <end position="1358"/>
    </location>
</feature>
<feature type="repeat" description="30">
    <location>
        <begin position="1359"/>
        <end position="1360"/>
    </location>
</feature>
<feature type="repeat" description="31">
    <location>
        <begin position="1361"/>
        <end position="1362"/>
    </location>
</feature>
<feature type="repeat" description="32">
    <location>
        <begin position="1363"/>
        <end position="1364"/>
    </location>
</feature>
<feature type="repeat" description="33">
    <location>
        <begin position="1365"/>
        <end position="1366"/>
    </location>
</feature>
<feature type="repeat" description="34">
    <location>
        <begin position="1367"/>
        <end position="1368"/>
    </location>
</feature>
<feature type="repeat" description="35">
    <location>
        <begin position="1369"/>
        <end position="1370"/>
    </location>
</feature>
<feature type="repeat" description="36">
    <location>
        <begin position="1371"/>
        <end position="1372"/>
    </location>
</feature>
<feature type="repeat" description="37">
    <location>
        <begin position="1373"/>
        <end position="1374"/>
    </location>
</feature>
<feature type="repeat" description="38">
    <location>
        <begin position="1375"/>
        <end position="1376"/>
    </location>
</feature>
<feature type="repeat" description="39">
    <location>
        <begin position="1377"/>
        <end position="1378"/>
    </location>
</feature>
<feature type="repeat" description="40">
    <location>
        <begin position="1379"/>
        <end position="1380"/>
    </location>
</feature>
<feature type="repeat" description="41">
    <location>
        <begin position="1381"/>
        <end position="1382"/>
    </location>
</feature>
<feature type="repeat" description="42">
    <location>
        <begin position="1383"/>
        <end position="1384"/>
    </location>
</feature>
<feature type="repeat" description="43">
    <location>
        <begin position="1385"/>
        <end position="1386"/>
    </location>
</feature>
<feature type="repeat" description="44">
    <location>
        <begin position="1387"/>
        <end position="1388"/>
    </location>
</feature>
<feature type="repeat" description="45">
    <location>
        <begin position="1389"/>
        <end position="1390"/>
    </location>
</feature>
<feature type="repeat" description="46">
    <location>
        <begin position="1391"/>
        <end position="1392"/>
    </location>
</feature>
<feature type="repeat" description="47">
    <location>
        <begin position="1393"/>
        <end position="1394"/>
    </location>
</feature>
<feature type="repeat" description="48">
    <location>
        <begin position="1395"/>
        <end position="1396"/>
    </location>
</feature>
<feature type="repeat" description="49">
    <location>
        <begin position="1397"/>
        <end position="1398"/>
    </location>
</feature>
<feature type="repeat" description="50">
    <location>
        <begin position="1399"/>
        <end position="1400"/>
    </location>
</feature>
<feature type="repeat" description="51">
    <location>
        <begin position="1401"/>
        <end position="1402"/>
    </location>
</feature>
<feature type="repeat" description="52">
    <location>
        <begin position="1403"/>
        <end position="1404"/>
    </location>
</feature>
<feature type="repeat" description="53">
    <location>
        <begin position="1405"/>
        <end position="1406"/>
    </location>
</feature>
<feature type="repeat" description="54">
    <location>
        <begin position="1407"/>
        <end position="1408"/>
    </location>
</feature>
<feature type="repeat" description="55">
    <location>
        <begin position="1409"/>
        <end position="1410"/>
    </location>
</feature>
<feature type="repeat" description="56">
    <location>
        <begin position="1411"/>
        <end position="1412"/>
    </location>
</feature>
<feature type="repeat" description="57">
    <location>
        <begin position="1413"/>
        <end position="1414"/>
    </location>
</feature>
<feature type="repeat" description="58">
    <location>
        <begin position="1415"/>
        <end position="1416"/>
    </location>
</feature>
<feature type="repeat" description="59">
    <location>
        <begin position="1417"/>
        <end position="1418"/>
    </location>
</feature>
<feature type="repeat" description="60">
    <location>
        <begin position="1419"/>
        <end position="1420"/>
    </location>
</feature>
<feature type="repeat" description="61">
    <location>
        <begin position="1421"/>
        <end position="1422"/>
    </location>
</feature>
<feature type="repeat" description="62">
    <location>
        <begin position="1423"/>
        <end position="1424"/>
    </location>
</feature>
<feature type="repeat" description="63">
    <location>
        <begin position="1425"/>
        <end position="1426"/>
    </location>
</feature>
<feature type="repeat" description="64">
    <location>
        <begin position="1427"/>
        <end position="1428"/>
    </location>
</feature>
<feature type="repeat" description="65">
    <location>
        <begin position="1429"/>
        <end position="1430"/>
    </location>
</feature>
<feature type="repeat" description="66">
    <location>
        <begin position="1431"/>
        <end position="1432"/>
    </location>
</feature>
<feature type="repeat" description="67">
    <location>
        <begin position="1433"/>
        <end position="1434"/>
    </location>
</feature>
<feature type="repeat" description="68">
    <location>
        <begin position="1435"/>
        <end position="1436"/>
    </location>
</feature>
<feature type="repeat" description="69">
    <location>
        <begin position="1437"/>
        <end position="1438"/>
    </location>
</feature>
<feature type="repeat" description="70">
    <location>
        <begin position="1439"/>
        <end position="1440"/>
    </location>
</feature>
<feature type="repeat" description="71">
    <location>
        <begin position="1441"/>
        <end position="1442"/>
    </location>
</feature>
<feature type="repeat" description="72">
    <location>
        <begin position="1443"/>
        <end position="1444"/>
    </location>
</feature>
<feature type="repeat" description="73">
    <location>
        <begin position="1445"/>
        <end position="1446"/>
    </location>
</feature>
<feature type="repeat" description="74">
    <location>
        <begin position="1447"/>
        <end position="1448"/>
    </location>
</feature>
<feature type="repeat" description="75">
    <location>
        <begin position="1449"/>
        <end position="1450"/>
    </location>
</feature>
<feature type="repeat" description="76">
    <location>
        <begin position="1451"/>
        <end position="1452"/>
    </location>
</feature>
<feature type="repeat" description="77">
    <location>
        <begin position="1453"/>
        <end position="1454"/>
    </location>
</feature>
<feature type="repeat" description="78">
    <location>
        <begin position="1455"/>
        <end position="1456"/>
    </location>
</feature>
<feature type="repeat" description="79">
    <location>
        <begin position="1457"/>
        <end position="1458"/>
    </location>
</feature>
<feature type="repeat" description="80">
    <location>
        <begin position="1459"/>
        <end position="1460"/>
    </location>
</feature>
<feature type="repeat" description="81">
    <location>
        <begin position="1461"/>
        <end position="1462"/>
    </location>
</feature>
<feature type="repeat" description="82">
    <location>
        <begin position="1463"/>
        <end position="1464"/>
    </location>
</feature>
<feature type="repeat" description="83">
    <location>
        <begin position="1465"/>
        <end position="1466"/>
    </location>
</feature>
<feature type="repeat" description="84">
    <location>
        <begin position="1467"/>
        <end position="1468"/>
    </location>
</feature>
<feature type="repeat" description="85">
    <location>
        <begin position="1469"/>
        <end position="1470"/>
    </location>
</feature>
<feature type="repeat" description="86">
    <location>
        <begin position="1471"/>
        <end position="1472"/>
    </location>
</feature>
<feature type="repeat" description="87">
    <location>
        <begin position="1473"/>
        <end position="1474"/>
    </location>
</feature>
<feature type="repeat" description="88">
    <location>
        <begin position="1475"/>
        <end position="1476"/>
    </location>
</feature>
<feature type="repeat" description="89">
    <location>
        <begin position="1477"/>
        <end position="1478"/>
    </location>
</feature>
<feature type="repeat" description="90">
    <location>
        <begin position="1479"/>
        <end position="1480"/>
    </location>
</feature>
<feature type="repeat" description="91">
    <location>
        <begin position="1481"/>
        <end position="1482"/>
    </location>
</feature>
<feature type="repeat" description="92">
    <location>
        <begin position="1483"/>
        <end position="1484"/>
    </location>
</feature>
<feature type="repeat" description="93">
    <location>
        <begin position="1485"/>
        <end position="1486"/>
    </location>
</feature>
<feature type="repeat" description="94">
    <location>
        <begin position="1487"/>
        <end position="1488"/>
    </location>
</feature>
<feature type="repeat" description="95">
    <location>
        <begin position="1489"/>
        <end position="1490"/>
    </location>
</feature>
<feature type="repeat" description="96">
    <location>
        <begin position="1491"/>
        <end position="1492"/>
    </location>
</feature>
<feature type="repeat" description="97">
    <location>
        <begin position="1493"/>
        <end position="1494"/>
    </location>
</feature>
<feature type="repeat" description="98">
    <location>
        <begin position="1495"/>
        <end position="1496"/>
    </location>
</feature>
<feature type="repeat" description="99">
    <location>
        <begin position="1497"/>
        <end position="1498"/>
    </location>
</feature>
<feature type="repeat" description="100">
    <location>
        <begin position="1499"/>
        <end position="1500"/>
    </location>
</feature>
<feature type="repeat" description="101">
    <location>
        <begin position="1501"/>
        <end position="1502"/>
    </location>
</feature>
<feature type="repeat" description="102">
    <location>
        <begin position="1503"/>
        <end position="1504"/>
    </location>
</feature>
<feature type="repeat" description="103">
    <location>
        <begin position="1505"/>
        <end position="1506"/>
    </location>
</feature>
<feature type="repeat" description="104">
    <location>
        <begin position="1507"/>
        <end position="1508"/>
    </location>
</feature>
<feature type="repeat" description="105">
    <location>
        <begin position="1509"/>
        <end position="1510"/>
    </location>
</feature>
<feature type="repeat" description="106">
    <location>
        <begin position="1511"/>
        <end position="1512"/>
    </location>
</feature>
<feature type="repeat" description="107">
    <location>
        <begin position="1513"/>
        <end position="1514"/>
    </location>
</feature>
<feature type="repeat" description="108">
    <location>
        <begin position="1515"/>
        <end position="1516"/>
    </location>
</feature>
<feature type="repeat" description="109">
    <location>
        <begin position="1517"/>
        <end position="1518"/>
    </location>
</feature>
<feature type="repeat" description="110">
    <location>
        <begin position="1519"/>
        <end position="1520"/>
    </location>
</feature>
<feature type="repeat" description="111">
    <location>
        <begin position="1521"/>
        <end position="1522"/>
    </location>
</feature>
<feature type="repeat" description="112">
    <location>
        <begin position="1523"/>
        <end position="1524"/>
    </location>
</feature>
<feature type="repeat" description="113">
    <location>
        <begin position="1525"/>
        <end position="1526"/>
    </location>
</feature>
<feature type="repeat" description="114">
    <location>
        <begin position="1527"/>
        <end position="1528"/>
    </location>
</feature>
<feature type="repeat" description="115">
    <location>
        <begin position="1529"/>
        <end position="1530"/>
    </location>
</feature>
<feature type="repeat" description="116">
    <location>
        <begin position="1531"/>
        <end position="1532"/>
    </location>
</feature>
<feature type="repeat" description="117">
    <location>
        <begin position="1533"/>
        <end position="1534"/>
    </location>
</feature>
<feature type="repeat" description="118">
    <location>
        <begin position="1535"/>
        <end position="1536"/>
    </location>
</feature>
<feature type="repeat" description="119">
    <location>
        <begin position="1537"/>
        <end position="1538"/>
    </location>
</feature>
<feature type="repeat" description="120">
    <location>
        <begin position="1539"/>
        <end position="1540"/>
    </location>
</feature>
<feature type="repeat" description="121">
    <location>
        <begin position="1541"/>
        <end position="1542"/>
    </location>
</feature>
<feature type="repeat" description="122">
    <location>
        <begin position="1543"/>
        <end position="1544"/>
    </location>
</feature>
<feature type="repeat" description="123">
    <location>
        <begin position="1545"/>
        <end position="1546"/>
    </location>
</feature>
<feature type="repeat" description="124">
    <location>
        <begin position="1547"/>
        <end position="1548"/>
    </location>
</feature>
<feature type="repeat" description="125">
    <location>
        <begin position="1549"/>
        <end position="1550"/>
    </location>
</feature>
<feature type="repeat" description="126">
    <location>
        <begin position="1551"/>
        <end position="1552"/>
    </location>
</feature>
<feature type="repeat" description="127">
    <location>
        <begin position="1553"/>
        <end position="1554"/>
    </location>
</feature>
<feature type="repeat" description="128">
    <location>
        <begin position="1555"/>
        <end position="1556"/>
    </location>
</feature>
<feature type="repeat" description="129">
    <location>
        <begin position="1557"/>
        <end position="1558"/>
    </location>
</feature>
<feature type="repeat" description="130">
    <location>
        <begin position="1559"/>
        <end position="1560"/>
    </location>
</feature>
<feature type="repeat" description="131">
    <location>
        <begin position="1561"/>
        <end position="1562"/>
    </location>
</feature>
<feature type="repeat" description="132">
    <location>
        <begin position="1563"/>
        <end position="1564"/>
    </location>
</feature>
<feature type="repeat" description="133">
    <location>
        <begin position="1565"/>
        <end position="1566"/>
    </location>
</feature>
<feature type="repeat" description="134">
    <location>
        <begin position="1567"/>
        <end position="1568"/>
    </location>
</feature>
<feature type="repeat" description="135">
    <location>
        <begin position="1569"/>
        <end position="1570"/>
    </location>
</feature>
<feature type="repeat" description="136">
    <location>
        <begin position="1571"/>
        <end position="1572"/>
    </location>
</feature>
<feature type="repeat" description="137">
    <location>
        <begin position="1573"/>
        <end position="1574"/>
    </location>
</feature>
<feature type="repeat" description="138">
    <location>
        <begin position="1575"/>
        <end position="1576"/>
    </location>
</feature>
<feature type="repeat" description="139">
    <location>
        <begin position="1577"/>
        <end position="1578"/>
    </location>
</feature>
<feature type="repeat" description="140">
    <location>
        <begin position="1579"/>
        <end position="1580"/>
    </location>
</feature>
<feature type="repeat" description="141">
    <location>
        <begin position="1581"/>
        <end position="1582"/>
    </location>
</feature>
<feature type="region of interest" description="Disordered" evidence="4">
    <location>
        <begin position="49"/>
        <end position="305"/>
    </location>
</feature>
<feature type="region of interest" description="Disordered" evidence="4">
    <location>
        <begin position="689"/>
        <end position="719"/>
    </location>
</feature>
<feature type="region of interest" description="Disordered" evidence="4">
    <location>
        <begin position="739"/>
        <end position="1611"/>
    </location>
</feature>
<feature type="region of interest" description="141 X 2 AA tandem repeats of D-[SAG]">
    <location>
        <begin position="1301"/>
        <end position="1582"/>
    </location>
</feature>
<feature type="short sequence motif" description="LPXTG sorting signal" evidence="3">
    <location>
        <begin position="1598"/>
        <end position="1602"/>
    </location>
</feature>
<feature type="compositionally biased region" description="Basic and acidic residues" evidence="4">
    <location>
        <begin position="56"/>
        <end position="65"/>
    </location>
</feature>
<feature type="compositionally biased region" description="Polar residues" evidence="4">
    <location>
        <begin position="69"/>
        <end position="83"/>
    </location>
</feature>
<feature type="compositionally biased region" description="Basic and acidic residues" evidence="4">
    <location>
        <begin position="90"/>
        <end position="106"/>
    </location>
</feature>
<feature type="compositionally biased region" description="Basic and acidic residues" evidence="4">
    <location>
        <begin position="127"/>
        <end position="180"/>
    </location>
</feature>
<feature type="compositionally biased region" description="Basic and acidic residues" evidence="4">
    <location>
        <begin position="188"/>
        <end position="264"/>
    </location>
</feature>
<feature type="compositionally biased region" description="Polar residues" evidence="4">
    <location>
        <begin position="289"/>
        <end position="298"/>
    </location>
</feature>
<feature type="compositionally biased region" description="Basic and acidic residues" evidence="4">
    <location>
        <begin position="779"/>
        <end position="817"/>
    </location>
</feature>
<feature type="compositionally biased region" description="Low complexity" evidence="4">
    <location>
        <begin position="818"/>
        <end position="832"/>
    </location>
</feature>
<feature type="compositionally biased region" description="Basic and acidic residues" evidence="4">
    <location>
        <begin position="907"/>
        <end position="945"/>
    </location>
</feature>
<feature type="compositionally biased region" description="Low complexity" evidence="4">
    <location>
        <begin position="946"/>
        <end position="960"/>
    </location>
</feature>
<feature type="compositionally biased region" description="Basic and acidic residues" evidence="4">
    <location>
        <begin position="1035"/>
        <end position="1073"/>
    </location>
</feature>
<feature type="compositionally biased region" description="Low complexity" evidence="4">
    <location>
        <begin position="1074"/>
        <end position="1088"/>
    </location>
</feature>
<feature type="compositionally biased region" description="Basic and acidic residues" evidence="4">
    <location>
        <begin position="1163"/>
        <end position="1189"/>
    </location>
</feature>
<feature type="compositionally biased region" description="Acidic residues" evidence="4">
    <location>
        <begin position="1282"/>
        <end position="1291"/>
    </location>
</feature>
<feature type="compositionally biased region" description="Acidic residues" evidence="4">
    <location>
        <begin position="1302"/>
        <end position="1580"/>
    </location>
</feature>
<feature type="compositionally biased region" description="Basic and acidic residues" evidence="4">
    <location>
        <begin position="1581"/>
        <end position="1599"/>
    </location>
</feature>
<feature type="modified residue" description="Pentaglycyl murein peptidoglycan amidated threonine" evidence="3">
    <location>
        <position position="1601"/>
    </location>
</feature>
<feature type="strand" evidence="5">
    <location>
        <begin position="393"/>
        <end position="398"/>
    </location>
</feature>
<feature type="helix" evidence="5">
    <location>
        <begin position="399"/>
        <end position="401"/>
    </location>
</feature>
<feature type="strand" evidence="5">
    <location>
        <begin position="402"/>
        <end position="411"/>
    </location>
</feature>
<feature type="turn" evidence="5">
    <location>
        <begin position="414"/>
        <end position="416"/>
    </location>
</feature>
<feature type="strand" evidence="5">
    <location>
        <begin position="423"/>
        <end position="427"/>
    </location>
</feature>
<feature type="turn" evidence="5">
    <location>
        <begin position="432"/>
        <end position="434"/>
    </location>
</feature>
<feature type="strand" evidence="5">
    <location>
        <begin position="436"/>
        <end position="444"/>
    </location>
</feature>
<feature type="strand" evidence="5">
    <location>
        <begin position="452"/>
        <end position="459"/>
    </location>
</feature>
<feature type="turn" evidence="5">
    <location>
        <begin position="465"/>
        <end position="467"/>
    </location>
</feature>
<feature type="strand" evidence="5">
    <location>
        <begin position="471"/>
        <end position="479"/>
    </location>
</feature>
<feature type="helix" evidence="5">
    <location>
        <begin position="481"/>
        <end position="487"/>
    </location>
</feature>
<feature type="strand" evidence="5">
    <location>
        <begin position="490"/>
        <end position="494"/>
    </location>
</feature>
<feature type="strand" evidence="5">
    <location>
        <begin position="500"/>
        <end position="505"/>
    </location>
</feature>
<feature type="helix" evidence="5">
    <location>
        <begin position="518"/>
        <end position="520"/>
    </location>
</feature>
<feature type="turn" evidence="5">
    <location>
        <begin position="522"/>
        <end position="525"/>
    </location>
</feature>
<feature type="strand" evidence="5">
    <location>
        <begin position="534"/>
        <end position="542"/>
    </location>
</feature>
<feature type="strand" evidence="5">
    <location>
        <begin position="547"/>
        <end position="550"/>
    </location>
</feature>
<feature type="strand" evidence="5">
    <location>
        <begin position="565"/>
        <end position="567"/>
    </location>
</feature>
<feature type="strand" evidence="6">
    <location>
        <begin position="577"/>
        <end position="579"/>
    </location>
</feature>
<feature type="strand" evidence="5">
    <location>
        <begin position="586"/>
        <end position="593"/>
    </location>
</feature>
<feature type="helix" evidence="5">
    <location>
        <begin position="594"/>
        <end position="596"/>
    </location>
</feature>
<feature type="strand" evidence="5">
    <location>
        <begin position="598"/>
        <end position="603"/>
    </location>
</feature>
<feature type="strand" evidence="5">
    <location>
        <begin position="606"/>
        <end position="611"/>
    </location>
</feature>
<feature type="helix" evidence="5">
    <location>
        <begin position="612"/>
        <end position="615"/>
    </location>
</feature>
<feature type="strand" evidence="5">
    <location>
        <begin position="623"/>
        <end position="631"/>
    </location>
</feature>
<feature type="strand" evidence="5">
    <location>
        <begin position="641"/>
        <end position="643"/>
    </location>
</feature>
<feature type="helix" evidence="5">
    <location>
        <begin position="645"/>
        <end position="647"/>
    </location>
</feature>
<feature type="strand" evidence="5">
    <location>
        <begin position="649"/>
        <end position="654"/>
    </location>
</feature>
<accession>P80544</accession>
<accession>Q9ZF62</accession>
<name>PLS_STAAU</name>
<gene>
    <name type="primary">pls</name>
</gene>
<organism>
    <name type="scientific">Staphylococcus aureus</name>
    <dbReference type="NCBI Taxonomy" id="1280"/>
    <lineage>
        <taxon>Bacteria</taxon>
        <taxon>Bacillati</taxon>
        <taxon>Bacillota</taxon>
        <taxon>Bacilli</taxon>
        <taxon>Bacillales</taxon>
        <taxon>Staphylococcaceae</taxon>
        <taxon>Staphylococcus</taxon>
    </lineage>
</organism>
<keyword id="KW-0002">3D-structure</keyword>
<keyword id="KW-0134">Cell wall</keyword>
<keyword id="KW-0903">Direct protein sequencing</keyword>
<keyword id="KW-0572">Peptidoglycan-anchor</keyword>
<keyword id="KW-0677">Repeat</keyword>
<keyword id="KW-0964">Secreted</keyword>
<keyword id="KW-0732">Signal</keyword>
<sequence length="1637" mass="174575">MNKNSKKKLDFLPNKLNKYSIRRFTVGTASILVGATLIFGVANDQAEAAENNTTQKQDDSSDASKVKGNVQTIEQSSANSNESDIPEQVDVTKDTTEQASTEEKANTTEQASTEEKADTTEQATTEEAPKAEGTDKVETEEAPKAEETDKATTEEAPKAEETDKATEEAPKTEETDKATTEEAPAAEETSKAATEEAPKAEETSKAATEEAPKAEETEKTATEEAPKTEETDKVETEEAPKAEETSKAATEKAPKAEETNKVETEEAPAAEETNKAATEETPAVEDTNAKSNSNAQPSETERTQVVDTVAKDLYKKSEVTEAEKAEIEKVLPKDISNLSNEEIKKIALSEVLKETANKENAQPRATFRSVSSNARTTNVNYSATALRAAAQDTVTKKGTGNFTAHGDIIHKTYKEEFPNEGTLTAFNTNFNPNTGTKGALEYNDKIDFNKDFTITVPVANNNQGNTTGADGWGFMFTQGNGQDFLNQGGILRDKGMANASGFKIDTAYNNVNGKVDKLDADKTNNLSQIGAAKVGYGTFVKNGADGVTNQVGQNALNTKDKPVNKIIYADNTTNHLDGQFHGQRLNDVVLNYDAATSTITATYAGKTWKATTDDLGIDKSQKYNFLITSSHMQNRYSNGIMRTNLEGVTITTPQADLIDDVEVTKQPIPHKTIREFDPTLEPGSPDVIVQKGEDGEKTTTTPTKVDPDTGDVVERGEPTTEVTKNPVDEIVHFTPEEVPQGHKDEFDPNLPIDGTEEVPGKPGIKNPETGEVVTPPVDDVTKHGPKAGEPEVTKEEIPFEKKREFNPDLKPGEEKVTQEGQTGEKTTTTPTTINPLTGEKVGEGEPTTEVTKEPVDEITQFGGEEVPQGHKDEFDPNLPIDGTEEVPGKPGIKNPETGEVVTPPVDDVTKHGPKAGEPEVTKEEIPFEKKREFNPDLKPGEEKVTQEGQTGEKTTTTPTTINPLTGEKVGEGEPTTEVTKEPVDEITQFGGEEVPQGHKDEFDPNLPIDGTEEVPGKPGIKNPETGEVVTPPVDDVTKHGPKAGEPEVTKEEIPFEKKREFNPDLKPGEEKVTQEGQTGEKTTTTPTTINPLTGEKVGEGEPTTEVTKEPVDEITQFGGEEVPQGHKDEFDPNLPIDGTEEVPGKPGIKNPETGEVVTPPVDDVTKHGPKAGEPEVTKEEIPYETKRVLDPTMEPGSPDKVAQKGENGEKTTTTPTTINPLTGEKVGEGEPTTEVTKEPIDEIVNYAPEIIPHGTREEIDPNLPEGETKVIPGKDGLKDPETGEIIEEPQDEVIIHGAKDDSDADSDSDADSDSDADSDSDADSDSDADSDSDSDSDSDSDSDSDADSDSDSDSDSDADSDSDADSDSDADSDSDSDADSDSDSDADSDSDSDSDSDADSDSDSDSDSDADSDSDADSDSDSDSDSDADSDSDSDSDSDADSDSDADSDSDADSDSDADSDSDSDSDSDADSDSDADSDSDADSDSDADSDSDSDSDSDADSDSDSDSDSDSDADSDSDADSDSDSDADSDSDADSDSDADGDSDADSDSDADSDSDSDSDSDSDSDSDADSDSDSDSDSDADRDHNDKTDKPNNKELPDTGNDAQNNGTLFGSLFAALGGLFLVGRRRKNKNNEEK</sequence>
<proteinExistence type="evidence at protein level"/>
<dbReference type="EMBL" id="AF115379">
    <property type="protein sequence ID" value="AAD09131.1"/>
    <property type="molecule type" value="Genomic_DNA"/>
</dbReference>
<dbReference type="PDB" id="7SJK">
    <property type="method" value="X-ray"/>
    <property type="resolution" value="1.21 A"/>
    <property type="chains" value="A/B=391-656"/>
</dbReference>
<dbReference type="PDB" id="7SP2">
    <property type="method" value="X-ray"/>
    <property type="resolution" value="2.75 A"/>
    <property type="chains" value="A=391-656"/>
</dbReference>
<dbReference type="PDBsum" id="7SJK"/>
<dbReference type="PDBsum" id="7SP2"/>
<dbReference type="SMR" id="P80544"/>
<dbReference type="UniLectin" id="P80544"/>
<dbReference type="GO" id="GO:0005576">
    <property type="term" value="C:extracellular region"/>
    <property type="evidence" value="ECO:0007669"/>
    <property type="project" value="UniProtKB-KW"/>
</dbReference>
<dbReference type="Gene3D" id="2.20.230.30">
    <property type="match status" value="1"/>
</dbReference>
<dbReference type="Gene3D" id="2.60.120.200">
    <property type="match status" value="1"/>
</dbReference>
<dbReference type="Gene3D" id="2.20.230.10">
    <property type="entry name" value="Resuscitation-promoting factor rpfb"/>
    <property type="match status" value="4"/>
</dbReference>
<dbReference type="InterPro" id="IPR011098">
    <property type="entry name" value="G5_dom"/>
</dbReference>
<dbReference type="InterPro" id="IPR050436">
    <property type="entry name" value="IsdA"/>
</dbReference>
<dbReference type="InterPro" id="IPR019931">
    <property type="entry name" value="LPXTG_anchor"/>
</dbReference>
<dbReference type="InterPro" id="IPR031477">
    <property type="entry name" value="SasG_E"/>
</dbReference>
<dbReference type="InterPro" id="IPR005877">
    <property type="entry name" value="YSIRK_signal_dom"/>
</dbReference>
<dbReference type="NCBIfam" id="TIGR01167">
    <property type="entry name" value="LPXTG_anchor"/>
    <property type="match status" value="1"/>
</dbReference>
<dbReference type="NCBIfam" id="TIGR01168">
    <property type="entry name" value="YSIRK_signal"/>
    <property type="match status" value="1"/>
</dbReference>
<dbReference type="PANTHER" id="PTHR37824">
    <property type="entry name" value="IRON-REGULATED SURFACE DETERMINANT PROTEIN C"/>
    <property type="match status" value="1"/>
</dbReference>
<dbReference type="PANTHER" id="PTHR37824:SF1">
    <property type="entry name" value="IRON-REGULATED SURFACE DETERMINANT PROTEIN C"/>
    <property type="match status" value="1"/>
</dbReference>
<dbReference type="Pfam" id="PF07501">
    <property type="entry name" value="G5"/>
    <property type="match status" value="5"/>
</dbReference>
<dbReference type="Pfam" id="PF00746">
    <property type="entry name" value="Gram_pos_anchor"/>
    <property type="match status" value="1"/>
</dbReference>
<dbReference type="Pfam" id="PF17041">
    <property type="entry name" value="SasG_E"/>
    <property type="match status" value="5"/>
</dbReference>
<dbReference type="Pfam" id="PF04650">
    <property type="entry name" value="YSIRK_signal"/>
    <property type="match status" value="1"/>
</dbReference>
<dbReference type="SMART" id="SM01208">
    <property type="entry name" value="G5"/>
    <property type="match status" value="5"/>
</dbReference>
<dbReference type="PROSITE" id="PS51109">
    <property type="entry name" value="G5"/>
    <property type="match status" value="5"/>
</dbReference>
<dbReference type="PROSITE" id="PS50847">
    <property type="entry name" value="GRAM_POS_ANCHORING"/>
    <property type="match status" value="1"/>
</dbReference>
<evidence type="ECO:0000255" key="1"/>
<evidence type="ECO:0000255" key="2">
    <source>
        <dbReference type="PROSITE-ProRule" id="PRU00437"/>
    </source>
</evidence>
<evidence type="ECO:0000255" key="3">
    <source>
        <dbReference type="PROSITE-ProRule" id="PRU00477"/>
    </source>
</evidence>
<evidence type="ECO:0000256" key="4">
    <source>
        <dbReference type="SAM" id="MobiDB-lite"/>
    </source>
</evidence>
<evidence type="ECO:0007829" key="5">
    <source>
        <dbReference type="PDB" id="7SJK"/>
    </source>
</evidence>
<evidence type="ECO:0007829" key="6">
    <source>
        <dbReference type="PDB" id="7SP2"/>
    </source>
</evidence>
<comment type="function">
    <text>Could have a role in preventing adhesion at some stages during an infection.</text>
</comment>
<comment type="subcellular location">
    <subcellularLocation>
        <location evidence="3">Secreted</location>
        <location evidence="3">Cell wall</location>
        <topology evidence="3">Peptidoglycan-anchor</topology>
    </subcellularLocation>
</comment>
<reference key="1">
    <citation type="journal article" date="2001" name="Infect. Immun.">
        <title>Expression of pls, a gene closely associated with the mecA gene of methicillin-resistant Staphylococcus aureus, prevents bacterial adhesion in vitro.</title>
        <authorList>
            <person name="Savolainen K."/>
            <person name="Paulin L."/>
            <person name="Westerlund-Wikstrom B."/>
            <person name="Foster T.J."/>
            <person name="Korhonen T.K."/>
            <person name="Kuusela P."/>
        </authorList>
    </citation>
    <scope>NUCLEOTIDE SEQUENCE [GENOMIC DNA]</scope>
    <source>
        <strain>Isolate 1061</strain>
    </source>
</reference>
<reference key="2">
    <citation type="journal article" date="1996" name="Eur. J. Biochem.">
        <title>Purification and characterisation of a plasmin-sensitive surface protein of Staphylococcus aureus.</title>
        <authorList>
            <person name="Hilden P."/>
            <person name="Savolainen K."/>
            <person name="Tyynelae J."/>
            <person name="Vuento M."/>
            <person name="Kuusela P."/>
        </authorList>
    </citation>
    <scope>PROTEIN SEQUENCE OF 624-628; 676-682; 938-948; 1156-1168; 1176-1185; 1199-1205 AND 1217-1224</scope>
    <source>
        <strain>Isolate 1061</strain>
    </source>
</reference>
<protein>
    <recommendedName>
        <fullName>Surface protein</fullName>
    </recommendedName>
    <alternativeName>
        <fullName>230 kDa cell-wall protein</fullName>
    </alternativeName>
    <alternativeName>
        <fullName>Plasmin-sensitive surface protein</fullName>
    </alternativeName>
</protein>